<accession>B1YEK4</accession>
<proteinExistence type="inferred from homology"/>
<dbReference type="EMBL" id="CP001022">
    <property type="protein sequence ID" value="ACB62172.1"/>
    <property type="molecule type" value="Genomic_DNA"/>
</dbReference>
<dbReference type="RefSeq" id="WP_012371588.1">
    <property type="nucleotide sequence ID" value="NC_010556.1"/>
</dbReference>
<dbReference type="SMR" id="B1YEK4"/>
<dbReference type="STRING" id="262543.Exig_2724"/>
<dbReference type="KEGG" id="esi:Exig_2724"/>
<dbReference type="eggNOG" id="COG0254">
    <property type="taxonomic scope" value="Bacteria"/>
</dbReference>
<dbReference type="HOGENOM" id="CLU_114306_2_2_9"/>
<dbReference type="OrthoDB" id="9803251at2"/>
<dbReference type="Proteomes" id="UP000001681">
    <property type="component" value="Chromosome"/>
</dbReference>
<dbReference type="GO" id="GO:1990904">
    <property type="term" value="C:ribonucleoprotein complex"/>
    <property type="evidence" value="ECO:0007669"/>
    <property type="project" value="UniProtKB-KW"/>
</dbReference>
<dbReference type="GO" id="GO:0005840">
    <property type="term" value="C:ribosome"/>
    <property type="evidence" value="ECO:0007669"/>
    <property type="project" value="UniProtKB-KW"/>
</dbReference>
<dbReference type="GO" id="GO:0003735">
    <property type="term" value="F:structural constituent of ribosome"/>
    <property type="evidence" value="ECO:0007669"/>
    <property type="project" value="InterPro"/>
</dbReference>
<dbReference type="GO" id="GO:0006412">
    <property type="term" value="P:translation"/>
    <property type="evidence" value="ECO:0007669"/>
    <property type="project" value="UniProtKB-UniRule"/>
</dbReference>
<dbReference type="Gene3D" id="4.10.830.30">
    <property type="entry name" value="Ribosomal protein L31"/>
    <property type="match status" value="1"/>
</dbReference>
<dbReference type="HAMAP" id="MF_00502">
    <property type="entry name" value="Ribosomal_bL31_2"/>
    <property type="match status" value="1"/>
</dbReference>
<dbReference type="InterPro" id="IPR034704">
    <property type="entry name" value="Ribosomal_bL28/bL31-like_sf"/>
</dbReference>
<dbReference type="InterPro" id="IPR002150">
    <property type="entry name" value="Ribosomal_bL31"/>
</dbReference>
<dbReference type="InterPro" id="IPR027493">
    <property type="entry name" value="Ribosomal_bL31_B"/>
</dbReference>
<dbReference type="InterPro" id="IPR042105">
    <property type="entry name" value="Ribosomal_bL31_sf"/>
</dbReference>
<dbReference type="NCBIfam" id="TIGR00105">
    <property type="entry name" value="L31"/>
    <property type="match status" value="1"/>
</dbReference>
<dbReference type="NCBIfam" id="NF002462">
    <property type="entry name" value="PRK01678.1"/>
    <property type="match status" value="1"/>
</dbReference>
<dbReference type="PANTHER" id="PTHR33280">
    <property type="entry name" value="50S RIBOSOMAL PROTEIN L31, CHLOROPLASTIC"/>
    <property type="match status" value="1"/>
</dbReference>
<dbReference type="PANTHER" id="PTHR33280:SF1">
    <property type="entry name" value="LARGE RIBOSOMAL SUBUNIT PROTEIN BL31C"/>
    <property type="match status" value="1"/>
</dbReference>
<dbReference type="Pfam" id="PF01197">
    <property type="entry name" value="Ribosomal_L31"/>
    <property type="match status" value="1"/>
</dbReference>
<dbReference type="PRINTS" id="PR01249">
    <property type="entry name" value="RIBOSOMALL31"/>
</dbReference>
<dbReference type="SUPFAM" id="SSF143800">
    <property type="entry name" value="L28p-like"/>
    <property type="match status" value="1"/>
</dbReference>
<dbReference type="PROSITE" id="PS01143">
    <property type="entry name" value="RIBOSOMAL_L31"/>
    <property type="match status" value="1"/>
</dbReference>
<name>RL31B_EXIS2</name>
<comment type="subunit">
    <text evidence="1">Part of the 50S ribosomal subunit.</text>
</comment>
<comment type="similarity">
    <text evidence="1">Belongs to the bacterial ribosomal protein bL31 family. Type B subfamily.</text>
</comment>
<gene>
    <name evidence="1" type="primary">rpmE2</name>
    <name type="ordered locus">Exig_2724</name>
</gene>
<evidence type="ECO:0000255" key="1">
    <source>
        <dbReference type="HAMAP-Rule" id="MF_00502"/>
    </source>
</evidence>
<evidence type="ECO:0000305" key="2"/>
<organism>
    <name type="scientific">Exiguobacterium sibiricum (strain DSM 17290 / CCUG 55495 / CIP 109462 / JCM 13490 / 255-15)</name>
    <dbReference type="NCBI Taxonomy" id="262543"/>
    <lineage>
        <taxon>Bacteria</taxon>
        <taxon>Bacillati</taxon>
        <taxon>Bacillota</taxon>
        <taxon>Bacilli</taxon>
        <taxon>Bacillales</taxon>
        <taxon>Bacillales Family XII. Incertae Sedis</taxon>
        <taxon>Exiguobacterium</taxon>
    </lineage>
</organism>
<sequence>MKQGIHPNYNKVVFMDSTTEYKFLTGSTRSSNETITWEDGNEYPLIRVDVSSDSHPFYTGRQKFNAADGRVDRFNKKYGRK</sequence>
<keyword id="KW-1185">Reference proteome</keyword>
<keyword id="KW-0687">Ribonucleoprotein</keyword>
<keyword id="KW-0689">Ribosomal protein</keyword>
<reference key="1">
    <citation type="submission" date="2008-04" db="EMBL/GenBank/DDBJ databases">
        <title>Complete sequence of chromosome of Exiguobacterium sibiricum 255-15.</title>
        <authorList>
            <consortium name="US DOE Joint Genome Institute"/>
            <person name="Copeland A."/>
            <person name="Lucas S."/>
            <person name="Lapidus A."/>
            <person name="Glavina del Rio T."/>
            <person name="Dalin E."/>
            <person name="Tice H."/>
            <person name="Bruce D."/>
            <person name="Goodwin L."/>
            <person name="Pitluck S."/>
            <person name="Kiss H."/>
            <person name="Chertkov O."/>
            <person name="Monk C."/>
            <person name="Brettin T."/>
            <person name="Detter J.C."/>
            <person name="Han C."/>
            <person name="Kuske C.R."/>
            <person name="Schmutz J."/>
            <person name="Larimer F."/>
            <person name="Land M."/>
            <person name="Hauser L."/>
            <person name="Kyrpides N."/>
            <person name="Mikhailova N."/>
            <person name="Vishnivetskaya T."/>
            <person name="Rodrigues D.F."/>
            <person name="Gilichinsky D."/>
            <person name="Tiedje J."/>
            <person name="Richardson P."/>
        </authorList>
    </citation>
    <scope>NUCLEOTIDE SEQUENCE [LARGE SCALE GENOMIC DNA]</scope>
    <source>
        <strain>DSM 17290 / CCUG 55495 / CIP 109462 / JCM 13490 / 255-15</strain>
    </source>
</reference>
<protein>
    <recommendedName>
        <fullName evidence="1">Large ribosomal subunit protein bL31B</fullName>
    </recommendedName>
    <alternativeName>
        <fullName evidence="2">50S ribosomal protein L31 type B</fullName>
    </alternativeName>
</protein>
<feature type="chain" id="PRO_1000126810" description="Large ribosomal subunit protein bL31B">
    <location>
        <begin position="1"/>
        <end position="81"/>
    </location>
</feature>